<keyword id="KW-0030">Aminoacyl-tRNA synthetase</keyword>
<keyword id="KW-0067">ATP-binding</keyword>
<keyword id="KW-0963">Cytoplasm</keyword>
<keyword id="KW-0436">Ligase</keyword>
<keyword id="KW-0479">Metal-binding</keyword>
<keyword id="KW-0547">Nucleotide-binding</keyword>
<keyword id="KW-0648">Protein biosynthesis</keyword>
<keyword id="KW-1185">Reference proteome</keyword>
<keyword id="KW-0862">Zinc</keyword>
<gene>
    <name evidence="1" type="primary">gltX</name>
    <name type="ordered locus">PST_2996</name>
</gene>
<reference key="1">
    <citation type="journal article" date="2008" name="Proc. Natl. Acad. Sci. U.S.A.">
        <title>Nitrogen fixation island and rhizosphere competence traits in the genome of root-associated Pseudomonas stutzeri A1501.</title>
        <authorList>
            <person name="Yan Y."/>
            <person name="Yang J."/>
            <person name="Dou Y."/>
            <person name="Chen M."/>
            <person name="Ping S."/>
            <person name="Peng J."/>
            <person name="Lu W."/>
            <person name="Zhang W."/>
            <person name="Yao Z."/>
            <person name="Li H."/>
            <person name="Liu W."/>
            <person name="He S."/>
            <person name="Geng L."/>
            <person name="Zhang X."/>
            <person name="Yang F."/>
            <person name="Yu H."/>
            <person name="Zhan Y."/>
            <person name="Li D."/>
            <person name="Lin Z."/>
            <person name="Wang Y."/>
            <person name="Elmerich C."/>
            <person name="Lin M."/>
            <person name="Jin Q."/>
        </authorList>
    </citation>
    <scope>NUCLEOTIDE SEQUENCE [LARGE SCALE GENOMIC DNA]</scope>
    <source>
        <strain>A1501</strain>
    </source>
</reference>
<name>SYE_STUS1</name>
<accession>A4VNT7</accession>
<dbReference type="EC" id="6.1.1.17" evidence="1"/>
<dbReference type="EMBL" id="CP000304">
    <property type="protein sequence ID" value="ABP80638.1"/>
    <property type="molecule type" value="Genomic_DNA"/>
</dbReference>
<dbReference type="RefSeq" id="WP_011914093.1">
    <property type="nucleotide sequence ID" value="NC_009434.1"/>
</dbReference>
<dbReference type="SMR" id="A4VNT7"/>
<dbReference type="KEGG" id="psa:PST_2996"/>
<dbReference type="eggNOG" id="COG0008">
    <property type="taxonomic scope" value="Bacteria"/>
</dbReference>
<dbReference type="HOGENOM" id="CLU_015768_6_3_6"/>
<dbReference type="Proteomes" id="UP000000233">
    <property type="component" value="Chromosome"/>
</dbReference>
<dbReference type="GO" id="GO:0005829">
    <property type="term" value="C:cytosol"/>
    <property type="evidence" value="ECO:0007669"/>
    <property type="project" value="TreeGrafter"/>
</dbReference>
<dbReference type="GO" id="GO:0005524">
    <property type="term" value="F:ATP binding"/>
    <property type="evidence" value="ECO:0007669"/>
    <property type="project" value="UniProtKB-UniRule"/>
</dbReference>
<dbReference type="GO" id="GO:0004818">
    <property type="term" value="F:glutamate-tRNA ligase activity"/>
    <property type="evidence" value="ECO:0007669"/>
    <property type="project" value="UniProtKB-UniRule"/>
</dbReference>
<dbReference type="GO" id="GO:0000049">
    <property type="term" value="F:tRNA binding"/>
    <property type="evidence" value="ECO:0007669"/>
    <property type="project" value="InterPro"/>
</dbReference>
<dbReference type="GO" id="GO:0008270">
    <property type="term" value="F:zinc ion binding"/>
    <property type="evidence" value="ECO:0007669"/>
    <property type="project" value="UniProtKB-UniRule"/>
</dbReference>
<dbReference type="GO" id="GO:0006424">
    <property type="term" value="P:glutamyl-tRNA aminoacylation"/>
    <property type="evidence" value="ECO:0007669"/>
    <property type="project" value="UniProtKB-UniRule"/>
</dbReference>
<dbReference type="CDD" id="cd00808">
    <property type="entry name" value="GluRS_core"/>
    <property type="match status" value="1"/>
</dbReference>
<dbReference type="FunFam" id="1.10.10.350:FF:000007">
    <property type="entry name" value="Glutamate--tRNA ligase"/>
    <property type="match status" value="1"/>
</dbReference>
<dbReference type="FunFam" id="3.40.50.620:FF:000045">
    <property type="entry name" value="Glutamate--tRNA ligase, mitochondrial"/>
    <property type="match status" value="1"/>
</dbReference>
<dbReference type="Gene3D" id="1.10.10.350">
    <property type="match status" value="1"/>
</dbReference>
<dbReference type="Gene3D" id="3.40.50.620">
    <property type="entry name" value="HUPs"/>
    <property type="match status" value="1"/>
</dbReference>
<dbReference type="HAMAP" id="MF_00022">
    <property type="entry name" value="Glu_tRNA_synth_type1"/>
    <property type="match status" value="1"/>
</dbReference>
<dbReference type="InterPro" id="IPR045462">
    <property type="entry name" value="aa-tRNA-synth_I_cd-bd"/>
</dbReference>
<dbReference type="InterPro" id="IPR020751">
    <property type="entry name" value="aa-tRNA-synth_I_codon-bd_sub2"/>
</dbReference>
<dbReference type="InterPro" id="IPR001412">
    <property type="entry name" value="aa-tRNA-synth_I_CS"/>
</dbReference>
<dbReference type="InterPro" id="IPR008925">
    <property type="entry name" value="aa_tRNA-synth_I_cd-bd_sf"/>
</dbReference>
<dbReference type="InterPro" id="IPR004527">
    <property type="entry name" value="Glu-tRNA-ligase_bac/mito"/>
</dbReference>
<dbReference type="InterPro" id="IPR000924">
    <property type="entry name" value="Glu/Gln-tRNA-synth"/>
</dbReference>
<dbReference type="InterPro" id="IPR020058">
    <property type="entry name" value="Glu/Gln-tRNA-synth_Ib_cat-dom"/>
</dbReference>
<dbReference type="InterPro" id="IPR049940">
    <property type="entry name" value="GluQ/Sye"/>
</dbReference>
<dbReference type="InterPro" id="IPR033910">
    <property type="entry name" value="GluRS_core"/>
</dbReference>
<dbReference type="InterPro" id="IPR014729">
    <property type="entry name" value="Rossmann-like_a/b/a_fold"/>
</dbReference>
<dbReference type="NCBIfam" id="TIGR00464">
    <property type="entry name" value="gltX_bact"/>
    <property type="match status" value="1"/>
</dbReference>
<dbReference type="PANTHER" id="PTHR43311">
    <property type="entry name" value="GLUTAMATE--TRNA LIGASE"/>
    <property type="match status" value="1"/>
</dbReference>
<dbReference type="PANTHER" id="PTHR43311:SF2">
    <property type="entry name" value="GLUTAMATE--TRNA LIGASE, MITOCHONDRIAL-RELATED"/>
    <property type="match status" value="1"/>
</dbReference>
<dbReference type="Pfam" id="PF19269">
    <property type="entry name" value="Anticodon_2"/>
    <property type="match status" value="1"/>
</dbReference>
<dbReference type="Pfam" id="PF00749">
    <property type="entry name" value="tRNA-synt_1c"/>
    <property type="match status" value="1"/>
</dbReference>
<dbReference type="PRINTS" id="PR00987">
    <property type="entry name" value="TRNASYNTHGLU"/>
</dbReference>
<dbReference type="SUPFAM" id="SSF48163">
    <property type="entry name" value="An anticodon-binding domain of class I aminoacyl-tRNA synthetases"/>
    <property type="match status" value="1"/>
</dbReference>
<dbReference type="SUPFAM" id="SSF52374">
    <property type="entry name" value="Nucleotidylyl transferase"/>
    <property type="match status" value="1"/>
</dbReference>
<dbReference type="PROSITE" id="PS00178">
    <property type="entry name" value="AA_TRNA_LIGASE_I"/>
    <property type="match status" value="1"/>
</dbReference>
<comment type="function">
    <text evidence="1">Catalyzes the attachment of glutamate to tRNA(Glu) in a two-step reaction: glutamate is first activated by ATP to form Glu-AMP and then transferred to the acceptor end of tRNA(Glu).</text>
</comment>
<comment type="catalytic activity">
    <reaction evidence="1">
        <text>tRNA(Glu) + L-glutamate + ATP = L-glutamyl-tRNA(Glu) + AMP + diphosphate</text>
        <dbReference type="Rhea" id="RHEA:23540"/>
        <dbReference type="Rhea" id="RHEA-COMP:9663"/>
        <dbReference type="Rhea" id="RHEA-COMP:9680"/>
        <dbReference type="ChEBI" id="CHEBI:29985"/>
        <dbReference type="ChEBI" id="CHEBI:30616"/>
        <dbReference type="ChEBI" id="CHEBI:33019"/>
        <dbReference type="ChEBI" id="CHEBI:78442"/>
        <dbReference type="ChEBI" id="CHEBI:78520"/>
        <dbReference type="ChEBI" id="CHEBI:456215"/>
        <dbReference type="EC" id="6.1.1.17"/>
    </reaction>
</comment>
<comment type="cofactor">
    <cofactor evidence="1">
        <name>Zn(2+)</name>
        <dbReference type="ChEBI" id="CHEBI:29105"/>
    </cofactor>
    <text evidence="1">Binds 1 zinc ion per subunit.</text>
</comment>
<comment type="subunit">
    <text evidence="1">Monomer.</text>
</comment>
<comment type="subcellular location">
    <subcellularLocation>
        <location evidence="1">Cytoplasm</location>
    </subcellularLocation>
</comment>
<comment type="similarity">
    <text evidence="1">Belongs to the class-I aminoacyl-tRNA synthetase family. Glutamate--tRNA ligase type 1 subfamily.</text>
</comment>
<sequence>MTTVRTRIAPSPTGDPHVGTAYIALFNLCFARQHGGQFILRIEDTDQLRSTRESEQQIYDALRWLGIEWDEGPDVGGPHGPYRQSERGEIYKKYSDELVAKGHAFPCFCSAERLDQVRAEQMANKETPRYDGHCMHLDPAEAERRITAGESHVIRMKVPSEGVCQVQDMLRGTVEIGWDRMDMQVLMKADGLPTYFLANVVDDHLMGITHVLRGEEWLPSAPKLIKLYEYFGWEQPQLCYMPLLRNPDKSKLSKRKNPTSVTFYERMGFLPQAMLNYLGRMGWSMPDEREKFTLEEMIEHFDIQRVSLGGPIFDLEKLSWLNGQWLRELPVEQFAAEVRKWAFNPEYMMKIAPHVQQRVETFSQIAPLAGFFFSGPLQLDPALFAHKKLDATQVRQVMQLILWKLEALRQWEKERITACITQVAEHLGFKLRDVMPLMFAAITGQASSVSVLDAMEILGPDLTRFRLRNALELLGGASKKEAKEWEKLLASLG</sequence>
<protein>
    <recommendedName>
        <fullName evidence="1">Glutamate--tRNA ligase</fullName>
        <ecNumber evidence="1">6.1.1.17</ecNumber>
    </recommendedName>
    <alternativeName>
        <fullName evidence="1">Glutamyl-tRNA synthetase</fullName>
        <shortName evidence="1">GluRS</shortName>
    </alternativeName>
</protein>
<evidence type="ECO:0000255" key="1">
    <source>
        <dbReference type="HAMAP-Rule" id="MF_00022"/>
    </source>
</evidence>
<feature type="chain" id="PRO_1000001942" description="Glutamate--tRNA ligase">
    <location>
        <begin position="1"/>
        <end position="493"/>
    </location>
</feature>
<feature type="short sequence motif" description="'HIGH' region" evidence="1">
    <location>
        <begin position="10"/>
        <end position="20"/>
    </location>
</feature>
<feature type="short sequence motif" description="'KMSKS' region" evidence="1">
    <location>
        <begin position="251"/>
        <end position="255"/>
    </location>
</feature>
<feature type="binding site" evidence="1">
    <location>
        <position position="107"/>
    </location>
    <ligand>
        <name>Zn(2+)</name>
        <dbReference type="ChEBI" id="CHEBI:29105"/>
    </ligand>
</feature>
<feature type="binding site" evidence="1">
    <location>
        <position position="109"/>
    </location>
    <ligand>
        <name>Zn(2+)</name>
        <dbReference type="ChEBI" id="CHEBI:29105"/>
    </ligand>
</feature>
<feature type="binding site" evidence="1">
    <location>
        <position position="134"/>
    </location>
    <ligand>
        <name>Zn(2+)</name>
        <dbReference type="ChEBI" id="CHEBI:29105"/>
    </ligand>
</feature>
<feature type="binding site" evidence="1">
    <location>
        <position position="136"/>
    </location>
    <ligand>
        <name>Zn(2+)</name>
        <dbReference type="ChEBI" id="CHEBI:29105"/>
    </ligand>
</feature>
<feature type="binding site" evidence="1">
    <location>
        <position position="254"/>
    </location>
    <ligand>
        <name>ATP</name>
        <dbReference type="ChEBI" id="CHEBI:30616"/>
    </ligand>
</feature>
<proteinExistence type="inferred from homology"/>
<organism>
    <name type="scientific">Stutzerimonas stutzeri (strain A1501)</name>
    <name type="common">Pseudomonas stutzeri</name>
    <dbReference type="NCBI Taxonomy" id="379731"/>
    <lineage>
        <taxon>Bacteria</taxon>
        <taxon>Pseudomonadati</taxon>
        <taxon>Pseudomonadota</taxon>
        <taxon>Gammaproteobacteria</taxon>
        <taxon>Pseudomonadales</taxon>
        <taxon>Pseudomonadaceae</taxon>
        <taxon>Stutzerimonas</taxon>
    </lineage>
</organism>